<accession>A7FVZ3</accession>
<protein>
    <recommendedName>
        <fullName evidence="2">Translation initiation factor IF-2</fullName>
    </recommendedName>
</protein>
<keyword id="KW-0963">Cytoplasm</keyword>
<keyword id="KW-0342">GTP-binding</keyword>
<keyword id="KW-0396">Initiation factor</keyword>
<keyword id="KW-0547">Nucleotide-binding</keyword>
<keyword id="KW-0648">Protein biosynthesis</keyword>
<comment type="function">
    <text evidence="2">One of the essential components for the initiation of protein synthesis. Protects formylmethionyl-tRNA from spontaneous hydrolysis and promotes its binding to the 30S ribosomal subunits. Also involved in the hydrolysis of GTP during the formation of the 70S ribosomal complex.</text>
</comment>
<comment type="subcellular location">
    <subcellularLocation>
        <location evidence="2">Cytoplasm</location>
    </subcellularLocation>
</comment>
<comment type="similarity">
    <text evidence="2">Belongs to the TRAFAC class translation factor GTPase superfamily. Classic translation factor GTPase family. IF-2 subfamily.</text>
</comment>
<feature type="chain" id="PRO_1000008229" description="Translation initiation factor IF-2">
    <location>
        <begin position="1"/>
        <end position="688"/>
    </location>
</feature>
<feature type="domain" description="tr-type G">
    <location>
        <begin position="187"/>
        <end position="354"/>
    </location>
</feature>
<feature type="region of interest" description="Disordered" evidence="3">
    <location>
        <begin position="53"/>
        <end position="100"/>
    </location>
</feature>
<feature type="region of interest" description="G1" evidence="1">
    <location>
        <begin position="196"/>
        <end position="203"/>
    </location>
</feature>
<feature type="region of interest" description="G2" evidence="1">
    <location>
        <begin position="221"/>
        <end position="225"/>
    </location>
</feature>
<feature type="region of interest" description="G3" evidence="1">
    <location>
        <begin position="242"/>
        <end position="245"/>
    </location>
</feature>
<feature type="region of interest" description="G4" evidence="1">
    <location>
        <begin position="296"/>
        <end position="299"/>
    </location>
</feature>
<feature type="region of interest" description="G5" evidence="1">
    <location>
        <begin position="332"/>
        <end position="334"/>
    </location>
</feature>
<feature type="compositionally biased region" description="Basic and acidic residues" evidence="3">
    <location>
        <begin position="53"/>
        <end position="62"/>
    </location>
</feature>
<feature type="compositionally biased region" description="Basic and acidic residues" evidence="3">
    <location>
        <begin position="86"/>
        <end position="95"/>
    </location>
</feature>
<feature type="binding site" evidence="2">
    <location>
        <begin position="196"/>
        <end position="203"/>
    </location>
    <ligand>
        <name>GTP</name>
        <dbReference type="ChEBI" id="CHEBI:37565"/>
    </ligand>
</feature>
<feature type="binding site" evidence="2">
    <location>
        <begin position="242"/>
        <end position="246"/>
    </location>
    <ligand>
        <name>GTP</name>
        <dbReference type="ChEBI" id="CHEBI:37565"/>
    </ligand>
</feature>
<feature type="binding site" evidence="2">
    <location>
        <begin position="296"/>
        <end position="299"/>
    </location>
    <ligand>
        <name>GTP</name>
        <dbReference type="ChEBI" id="CHEBI:37565"/>
    </ligand>
</feature>
<dbReference type="EMBL" id="CP000726">
    <property type="protein sequence ID" value="ABS34758.1"/>
    <property type="molecule type" value="Genomic_DNA"/>
</dbReference>
<dbReference type="RefSeq" id="WP_003388357.1">
    <property type="nucleotide sequence ID" value="NC_009697.1"/>
</dbReference>
<dbReference type="SMR" id="A7FVZ3"/>
<dbReference type="GeneID" id="5186673"/>
<dbReference type="KEGG" id="cba:CLB_2282"/>
<dbReference type="HOGENOM" id="CLU_006301_5_1_9"/>
<dbReference type="GO" id="GO:0005829">
    <property type="term" value="C:cytosol"/>
    <property type="evidence" value="ECO:0007669"/>
    <property type="project" value="TreeGrafter"/>
</dbReference>
<dbReference type="GO" id="GO:0005525">
    <property type="term" value="F:GTP binding"/>
    <property type="evidence" value="ECO:0007669"/>
    <property type="project" value="UniProtKB-KW"/>
</dbReference>
<dbReference type="GO" id="GO:0003924">
    <property type="term" value="F:GTPase activity"/>
    <property type="evidence" value="ECO:0007669"/>
    <property type="project" value="UniProtKB-UniRule"/>
</dbReference>
<dbReference type="GO" id="GO:0003743">
    <property type="term" value="F:translation initiation factor activity"/>
    <property type="evidence" value="ECO:0007669"/>
    <property type="project" value="UniProtKB-UniRule"/>
</dbReference>
<dbReference type="CDD" id="cd01887">
    <property type="entry name" value="IF2_eIF5B"/>
    <property type="match status" value="1"/>
</dbReference>
<dbReference type="CDD" id="cd03702">
    <property type="entry name" value="IF2_mtIF2_II"/>
    <property type="match status" value="1"/>
</dbReference>
<dbReference type="CDD" id="cd03692">
    <property type="entry name" value="mtIF2_IVc"/>
    <property type="match status" value="1"/>
</dbReference>
<dbReference type="FunFam" id="2.40.30.10:FF:000007">
    <property type="entry name" value="Translation initiation factor IF-2"/>
    <property type="match status" value="1"/>
</dbReference>
<dbReference type="FunFam" id="2.40.30.10:FF:000008">
    <property type="entry name" value="Translation initiation factor IF-2"/>
    <property type="match status" value="1"/>
</dbReference>
<dbReference type="FunFam" id="3.40.50.10050:FF:000001">
    <property type="entry name" value="Translation initiation factor IF-2"/>
    <property type="match status" value="1"/>
</dbReference>
<dbReference type="FunFam" id="3.40.50.300:FF:000019">
    <property type="entry name" value="Translation initiation factor IF-2"/>
    <property type="match status" value="1"/>
</dbReference>
<dbReference type="Gene3D" id="1.10.10.2480">
    <property type="match status" value="1"/>
</dbReference>
<dbReference type="Gene3D" id="3.40.50.300">
    <property type="entry name" value="P-loop containing nucleotide triphosphate hydrolases"/>
    <property type="match status" value="1"/>
</dbReference>
<dbReference type="Gene3D" id="2.40.30.10">
    <property type="entry name" value="Translation factors"/>
    <property type="match status" value="2"/>
</dbReference>
<dbReference type="Gene3D" id="3.40.50.10050">
    <property type="entry name" value="Translation initiation factor IF- 2, domain 3"/>
    <property type="match status" value="1"/>
</dbReference>
<dbReference type="HAMAP" id="MF_00100_B">
    <property type="entry name" value="IF_2_B"/>
    <property type="match status" value="1"/>
</dbReference>
<dbReference type="InterPro" id="IPR053905">
    <property type="entry name" value="EF-G-like_DII"/>
</dbReference>
<dbReference type="InterPro" id="IPR044145">
    <property type="entry name" value="IF2_II"/>
</dbReference>
<dbReference type="InterPro" id="IPR006847">
    <property type="entry name" value="IF2_N"/>
</dbReference>
<dbReference type="InterPro" id="IPR027417">
    <property type="entry name" value="P-loop_NTPase"/>
</dbReference>
<dbReference type="InterPro" id="IPR005225">
    <property type="entry name" value="Small_GTP-bd"/>
</dbReference>
<dbReference type="InterPro" id="IPR000795">
    <property type="entry name" value="T_Tr_GTP-bd_dom"/>
</dbReference>
<dbReference type="InterPro" id="IPR000178">
    <property type="entry name" value="TF_IF2_bacterial-like"/>
</dbReference>
<dbReference type="InterPro" id="IPR015760">
    <property type="entry name" value="TIF_IF2"/>
</dbReference>
<dbReference type="InterPro" id="IPR023115">
    <property type="entry name" value="TIF_IF2_dom3"/>
</dbReference>
<dbReference type="InterPro" id="IPR036925">
    <property type="entry name" value="TIF_IF2_dom3_sf"/>
</dbReference>
<dbReference type="InterPro" id="IPR009000">
    <property type="entry name" value="Transl_B-barrel_sf"/>
</dbReference>
<dbReference type="NCBIfam" id="TIGR00487">
    <property type="entry name" value="IF-2"/>
    <property type="match status" value="1"/>
</dbReference>
<dbReference type="NCBIfam" id="TIGR00231">
    <property type="entry name" value="small_GTP"/>
    <property type="match status" value="1"/>
</dbReference>
<dbReference type="PANTHER" id="PTHR43381:SF5">
    <property type="entry name" value="TR-TYPE G DOMAIN-CONTAINING PROTEIN"/>
    <property type="match status" value="1"/>
</dbReference>
<dbReference type="PANTHER" id="PTHR43381">
    <property type="entry name" value="TRANSLATION INITIATION FACTOR IF-2-RELATED"/>
    <property type="match status" value="1"/>
</dbReference>
<dbReference type="Pfam" id="PF22042">
    <property type="entry name" value="EF-G_D2"/>
    <property type="match status" value="1"/>
</dbReference>
<dbReference type="Pfam" id="PF00009">
    <property type="entry name" value="GTP_EFTU"/>
    <property type="match status" value="1"/>
</dbReference>
<dbReference type="Pfam" id="PF11987">
    <property type="entry name" value="IF-2"/>
    <property type="match status" value="1"/>
</dbReference>
<dbReference type="Pfam" id="PF04760">
    <property type="entry name" value="IF2_N"/>
    <property type="match status" value="2"/>
</dbReference>
<dbReference type="SUPFAM" id="SSF52156">
    <property type="entry name" value="Initiation factor IF2/eIF5b, domain 3"/>
    <property type="match status" value="1"/>
</dbReference>
<dbReference type="SUPFAM" id="SSF52540">
    <property type="entry name" value="P-loop containing nucleoside triphosphate hydrolases"/>
    <property type="match status" value="1"/>
</dbReference>
<dbReference type="SUPFAM" id="SSF50447">
    <property type="entry name" value="Translation proteins"/>
    <property type="match status" value="2"/>
</dbReference>
<dbReference type="PROSITE" id="PS51722">
    <property type="entry name" value="G_TR_2"/>
    <property type="match status" value="1"/>
</dbReference>
<dbReference type="PROSITE" id="PS01176">
    <property type="entry name" value="IF2"/>
    <property type="match status" value="1"/>
</dbReference>
<organism>
    <name type="scientific">Clostridium botulinum (strain ATCC 19397 / Type A)</name>
    <dbReference type="NCBI Taxonomy" id="441770"/>
    <lineage>
        <taxon>Bacteria</taxon>
        <taxon>Bacillati</taxon>
        <taxon>Bacillota</taxon>
        <taxon>Clostridia</taxon>
        <taxon>Eubacteriales</taxon>
        <taxon>Clostridiaceae</taxon>
        <taxon>Clostridium</taxon>
    </lineage>
</organism>
<sequence>MAKIRVYELAKELNISSKELITLLEEEFSVEVKNHMSAIEDEDANLIKELLSGKEKSEKTKEEDDEIETTAKNPIKESMNNKKSNKRDDKNEKVNTENAEDMGIITMTSDTITVKEISDKLEKSYAEVIKELMLMGVMASVNQEINFEMAEKLAAKFDMEILKEDEDEKEDLEDILKDNEEEEYLQKRSPIITVMGHVDHGKTSLLDAIRKSKVTSTEAGGITQHIGAYTVELNGEAITFLDTPGHAAFTAMRARGAQVTDIVILVVAADDGIMPQTQEAISHCKAANVPLIVAINKIDRPGANIDKVKQELTEYGLVAEDWGGDTICVPVSAHTKEGIDDLLEMILLSSEILELKANPNRKAKGTVVEAKLDKGRGPVATLLIQNGTLRVGDSIVVGSTYGRIRAMFNDKGRNIESAGPSTPVEILGLSEVPEAGDKFYQVKEEKTARGIADKRKEKIRDEYLQSTHKVSLEDLYNQIQEGTVKELGLIVKADVQGSVEALKQSLEKLSTEEVKVRVIHGGVGAINETDVTLATASNGIILGFNVRPDNNAIIASERDGVDIKTYRVIYDAIEDIKSAMLGMLEPEFKEVVIGTAEVRQVYKISSVGTIAGAYIQTGKLARNAGARVIRDGIVIFESELASLKRFKDDAKEVAQGYECGLSIEKFNDIKEGDIIECFIMEEIKKKTL</sequence>
<evidence type="ECO:0000250" key="1"/>
<evidence type="ECO:0000255" key="2">
    <source>
        <dbReference type="HAMAP-Rule" id="MF_00100"/>
    </source>
</evidence>
<evidence type="ECO:0000256" key="3">
    <source>
        <dbReference type="SAM" id="MobiDB-lite"/>
    </source>
</evidence>
<reference key="1">
    <citation type="journal article" date="2007" name="PLoS ONE">
        <title>Analysis of the neurotoxin complex genes in Clostridium botulinum A1-A4 and B1 strains: BoNT/A3, /Ba4 and /B1 clusters are located within plasmids.</title>
        <authorList>
            <person name="Smith T.J."/>
            <person name="Hill K.K."/>
            <person name="Foley B.T."/>
            <person name="Detter J.C."/>
            <person name="Munk A.C."/>
            <person name="Bruce D.C."/>
            <person name="Doggett N.A."/>
            <person name="Smith L.A."/>
            <person name="Marks J.D."/>
            <person name="Xie G."/>
            <person name="Brettin T.S."/>
        </authorList>
    </citation>
    <scope>NUCLEOTIDE SEQUENCE [LARGE SCALE GENOMIC DNA]</scope>
    <source>
        <strain>ATCC 19397 / Type A</strain>
    </source>
</reference>
<name>IF2_CLOB1</name>
<gene>
    <name evidence="2" type="primary">infB</name>
    <name type="ordered locus">CLB_2282</name>
</gene>
<proteinExistence type="inferred from homology"/>